<proteinExistence type="inferred from homology"/>
<keyword id="KW-0963">Cytoplasm</keyword>
<keyword id="KW-0238">DNA-binding</keyword>
<keyword id="KW-0804">Transcription</keyword>
<keyword id="KW-0805">Transcription regulation</keyword>
<accession>A4VZK6</accession>
<gene>
    <name type="ordered locus">SSU98_0387</name>
</gene>
<protein>
    <recommendedName>
        <fullName evidence="1">Probable transcriptional regulatory protein SSU98_0387</fullName>
    </recommendedName>
</protein>
<evidence type="ECO:0000255" key="1">
    <source>
        <dbReference type="HAMAP-Rule" id="MF_00918"/>
    </source>
</evidence>
<sequence length="238" mass="25821">MGRKWANIVAKKTAKDGANSKVYAKFGVEIYVAAKKGDPDPETNSALKFVIDRAKQAQVPKHIIDKAIDKAKGNTDETFVEGRYEGFGPNGSMIIVDTLTSNVNRTAANVRSAFGKNGGNMGASGSVSFMFDKKGVVVFAGDDADAIFELLLEADVEVDDVEAEDGTITIIQLQLDLHKAIVALKESGIQEFNVTELEMIPQSEVSLEGDDLATFEKLYDALEDDEDVQKIYTNVDGF</sequence>
<comment type="subcellular location">
    <subcellularLocation>
        <location evidence="1">Cytoplasm</location>
    </subcellularLocation>
</comment>
<comment type="similarity">
    <text evidence="1">Belongs to the TACO1 family. YeeN subfamily.</text>
</comment>
<dbReference type="EMBL" id="CP000408">
    <property type="protein sequence ID" value="ABP91545.1"/>
    <property type="molecule type" value="Genomic_DNA"/>
</dbReference>
<dbReference type="SMR" id="A4VZK6"/>
<dbReference type="KEGG" id="ssv:SSU98_0387"/>
<dbReference type="HOGENOM" id="CLU_062974_2_0_9"/>
<dbReference type="BioCyc" id="SSUI391296:GI2E-425-MONOMER"/>
<dbReference type="GO" id="GO:0005829">
    <property type="term" value="C:cytosol"/>
    <property type="evidence" value="ECO:0007669"/>
    <property type="project" value="TreeGrafter"/>
</dbReference>
<dbReference type="GO" id="GO:0003677">
    <property type="term" value="F:DNA binding"/>
    <property type="evidence" value="ECO:0007669"/>
    <property type="project" value="UniProtKB-UniRule"/>
</dbReference>
<dbReference type="GO" id="GO:0006355">
    <property type="term" value="P:regulation of DNA-templated transcription"/>
    <property type="evidence" value="ECO:0007669"/>
    <property type="project" value="UniProtKB-UniRule"/>
</dbReference>
<dbReference type="FunFam" id="1.10.10.200:FF:000003">
    <property type="entry name" value="Probable transcriptional regulatory protein YeeN"/>
    <property type="match status" value="1"/>
</dbReference>
<dbReference type="Gene3D" id="1.10.10.200">
    <property type="match status" value="1"/>
</dbReference>
<dbReference type="Gene3D" id="3.30.70.980">
    <property type="match status" value="2"/>
</dbReference>
<dbReference type="HAMAP" id="MF_00693">
    <property type="entry name" value="Transcrip_reg_TACO1"/>
    <property type="match status" value="1"/>
</dbReference>
<dbReference type="HAMAP" id="MF_00918">
    <property type="entry name" value="Transcrip_reg_TACO1_YeeN"/>
    <property type="match status" value="1"/>
</dbReference>
<dbReference type="InterPro" id="IPR017856">
    <property type="entry name" value="Integrase-like_N"/>
</dbReference>
<dbReference type="InterPro" id="IPR048300">
    <property type="entry name" value="TACO1_YebC-like_2nd/3rd_dom"/>
</dbReference>
<dbReference type="InterPro" id="IPR049083">
    <property type="entry name" value="TACO1_YebC_N"/>
</dbReference>
<dbReference type="InterPro" id="IPR002876">
    <property type="entry name" value="Transcrip_reg_TACO1-like"/>
</dbReference>
<dbReference type="InterPro" id="IPR026564">
    <property type="entry name" value="Transcrip_reg_TACO1-like_dom3"/>
</dbReference>
<dbReference type="InterPro" id="IPR026562">
    <property type="entry name" value="Transcrip_reg_TACO1_YeeN"/>
</dbReference>
<dbReference type="InterPro" id="IPR029072">
    <property type="entry name" value="YebC-like"/>
</dbReference>
<dbReference type="NCBIfam" id="NF009044">
    <property type="entry name" value="PRK12378.1"/>
    <property type="match status" value="1"/>
</dbReference>
<dbReference type="NCBIfam" id="TIGR01033">
    <property type="entry name" value="YebC/PmpR family DNA-binding transcriptional regulator"/>
    <property type="match status" value="1"/>
</dbReference>
<dbReference type="PANTHER" id="PTHR12532">
    <property type="entry name" value="TRANSLATIONAL ACTIVATOR OF CYTOCHROME C OXIDASE 1"/>
    <property type="match status" value="1"/>
</dbReference>
<dbReference type="PANTHER" id="PTHR12532:SF0">
    <property type="entry name" value="TRANSLATIONAL ACTIVATOR OF CYTOCHROME C OXIDASE 1"/>
    <property type="match status" value="1"/>
</dbReference>
<dbReference type="Pfam" id="PF20772">
    <property type="entry name" value="TACO1_YebC_N"/>
    <property type="match status" value="1"/>
</dbReference>
<dbReference type="Pfam" id="PF01709">
    <property type="entry name" value="Transcrip_reg"/>
    <property type="match status" value="1"/>
</dbReference>
<dbReference type="SUPFAM" id="SSF75625">
    <property type="entry name" value="YebC-like"/>
    <property type="match status" value="1"/>
</dbReference>
<reference key="1">
    <citation type="journal article" date="2007" name="PLoS ONE">
        <title>A glimpse of streptococcal toxic shock syndrome from comparative genomics of S. suis 2 Chinese isolates.</title>
        <authorList>
            <person name="Chen C."/>
            <person name="Tang J."/>
            <person name="Dong W."/>
            <person name="Wang C."/>
            <person name="Feng Y."/>
            <person name="Wang J."/>
            <person name="Zheng F."/>
            <person name="Pan X."/>
            <person name="Liu D."/>
            <person name="Li M."/>
            <person name="Song Y."/>
            <person name="Zhu X."/>
            <person name="Sun H."/>
            <person name="Feng T."/>
            <person name="Guo Z."/>
            <person name="Ju A."/>
            <person name="Ge J."/>
            <person name="Dong Y."/>
            <person name="Sun W."/>
            <person name="Jiang Y."/>
            <person name="Wang J."/>
            <person name="Yan J."/>
            <person name="Yang H."/>
            <person name="Wang X."/>
            <person name="Gao G.F."/>
            <person name="Yang R."/>
            <person name="Wang J."/>
            <person name="Yu J."/>
        </authorList>
    </citation>
    <scope>NUCLEOTIDE SEQUENCE [LARGE SCALE GENOMIC DNA]</scope>
    <source>
        <strain>98HAH33</strain>
    </source>
</reference>
<organism>
    <name type="scientific">Streptococcus suis (strain 98HAH33)</name>
    <dbReference type="NCBI Taxonomy" id="391296"/>
    <lineage>
        <taxon>Bacteria</taxon>
        <taxon>Bacillati</taxon>
        <taxon>Bacillota</taxon>
        <taxon>Bacilli</taxon>
        <taxon>Lactobacillales</taxon>
        <taxon>Streptococcaceae</taxon>
        <taxon>Streptococcus</taxon>
    </lineage>
</organism>
<feature type="chain" id="PRO_1000045377" description="Probable transcriptional regulatory protein SSU98_0387">
    <location>
        <begin position="1"/>
        <end position="238"/>
    </location>
</feature>
<name>Y387_STRS2</name>